<keyword id="KW-0143">Chaperone</keyword>
<keyword id="KW-0963">Cytoplasm</keyword>
<keyword id="KW-0996">Nickel insertion</keyword>
<comment type="function">
    <text evidence="1">Required for maturation of urease via the functional incorporation of the urease nickel metallocenter.</text>
</comment>
<comment type="subunit">
    <text evidence="1">UreD, UreF and UreG form a complex that acts as a GTP-hydrolysis-dependent molecular chaperone, activating the urease apoprotein by helping to assemble the nickel containing metallocenter of UreC. The UreE protein probably delivers the nickel.</text>
</comment>
<comment type="subcellular location">
    <subcellularLocation>
        <location evidence="1">Cytoplasm</location>
    </subcellularLocation>
</comment>
<comment type="similarity">
    <text evidence="1">Belongs to the UreD family.</text>
</comment>
<sequence>MTSQSQNIVETPSRVRAHALGINAPELAQYQDEPAQMRSGAVGKSGYLKLRFAKREHRSILAEMERRVPSMVQKALYWDEEMPELPCVTMISTSGCILQGDRLATDVIVEAGACAHVTTQSATKVHMMNANYASQIQNFTVEEGGYLEFMPDPLIPHRNSRFITDTTINIHPTATAIYSEVLMSGRKYHHADERFGFDVYSSRVAAHVFLGKEQPAGKELFVEKYVLEPKSESLDAIGVMQSFDAFGNVILLTPKQHHERILARVPAHFDIKGGIASGATRLPNDCGLVFKALGIDSAGVKNEIRQFWKIAREEILGVTLPEKFLWR</sequence>
<accession>A1JKE3</accession>
<proteinExistence type="inferred from homology"/>
<organism>
    <name type="scientific">Yersinia enterocolitica serotype O:8 / biotype 1B (strain NCTC 13174 / 8081)</name>
    <dbReference type="NCBI Taxonomy" id="393305"/>
    <lineage>
        <taxon>Bacteria</taxon>
        <taxon>Pseudomonadati</taxon>
        <taxon>Pseudomonadota</taxon>
        <taxon>Gammaproteobacteria</taxon>
        <taxon>Enterobacterales</taxon>
        <taxon>Yersiniaceae</taxon>
        <taxon>Yersinia</taxon>
    </lineage>
</organism>
<reference key="1">
    <citation type="journal article" date="2006" name="PLoS Genet.">
        <title>The complete genome sequence and comparative genome analysis of the high pathogenicity Yersinia enterocolitica strain 8081.</title>
        <authorList>
            <person name="Thomson N.R."/>
            <person name="Howard S."/>
            <person name="Wren B.W."/>
            <person name="Holden M.T.G."/>
            <person name="Crossman L."/>
            <person name="Challis G.L."/>
            <person name="Churcher C."/>
            <person name="Mungall K."/>
            <person name="Brooks K."/>
            <person name="Chillingworth T."/>
            <person name="Feltwell T."/>
            <person name="Abdellah Z."/>
            <person name="Hauser H."/>
            <person name="Jagels K."/>
            <person name="Maddison M."/>
            <person name="Moule S."/>
            <person name="Sanders M."/>
            <person name="Whitehead S."/>
            <person name="Quail M.A."/>
            <person name="Dougan G."/>
            <person name="Parkhill J."/>
            <person name="Prentice M.B."/>
        </authorList>
    </citation>
    <scope>NUCLEOTIDE SEQUENCE [LARGE SCALE GENOMIC DNA]</scope>
    <source>
        <strain>NCTC 13174 / 8081</strain>
    </source>
</reference>
<evidence type="ECO:0000255" key="1">
    <source>
        <dbReference type="HAMAP-Rule" id="MF_01384"/>
    </source>
</evidence>
<feature type="chain" id="PRO_0000340533" description="Urease accessory protein UreD">
    <location>
        <begin position="1"/>
        <end position="327"/>
    </location>
</feature>
<protein>
    <recommendedName>
        <fullName evidence="1">Urease accessory protein UreD</fullName>
    </recommendedName>
</protein>
<name>URED_YERE8</name>
<gene>
    <name evidence="1" type="primary">ureD</name>
    <name type="ordered locus">YE0957</name>
</gene>
<dbReference type="EMBL" id="AM286415">
    <property type="protein sequence ID" value="CAL11055.1"/>
    <property type="molecule type" value="Genomic_DNA"/>
</dbReference>
<dbReference type="RefSeq" id="WP_011815718.1">
    <property type="nucleotide sequence ID" value="NC_008800.1"/>
</dbReference>
<dbReference type="RefSeq" id="YP_001005291.1">
    <property type="nucleotide sequence ID" value="NC_008800.1"/>
</dbReference>
<dbReference type="SMR" id="A1JKE3"/>
<dbReference type="KEGG" id="yen:YE0957"/>
<dbReference type="PATRIC" id="fig|393305.7.peg.1058"/>
<dbReference type="eggNOG" id="COG0829">
    <property type="taxonomic scope" value="Bacteria"/>
</dbReference>
<dbReference type="HOGENOM" id="CLU_056339_1_0_6"/>
<dbReference type="OrthoDB" id="9807968at2"/>
<dbReference type="Proteomes" id="UP000000642">
    <property type="component" value="Chromosome"/>
</dbReference>
<dbReference type="GO" id="GO:0005737">
    <property type="term" value="C:cytoplasm"/>
    <property type="evidence" value="ECO:0007669"/>
    <property type="project" value="UniProtKB-SubCell"/>
</dbReference>
<dbReference type="GO" id="GO:0016151">
    <property type="term" value="F:nickel cation binding"/>
    <property type="evidence" value="ECO:0007669"/>
    <property type="project" value="UniProtKB-UniRule"/>
</dbReference>
<dbReference type="HAMAP" id="MF_01384">
    <property type="entry name" value="UreD"/>
    <property type="match status" value="1"/>
</dbReference>
<dbReference type="InterPro" id="IPR002669">
    <property type="entry name" value="UreD"/>
</dbReference>
<dbReference type="PANTHER" id="PTHR33643">
    <property type="entry name" value="UREASE ACCESSORY PROTEIN D"/>
    <property type="match status" value="1"/>
</dbReference>
<dbReference type="PANTHER" id="PTHR33643:SF1">
    <property type="entry name" value="UREASE ACCESSORY PROTEIN D"/>
    <property type="match status" value="1"/>
</dbReference>
<dbReference type="Pfam" id="PF01774">
    <property type="entry name" value="UreD"/>
    <property type="match status" value="1"/>
</dbReference>